<reference key="1">
    <citation type="journal article" date="2010" name="Genome Biol. Evol.">
        <title>Continuing evolution of Burkholderia mallei through genome reduction and large-scale rearrangements.</title>
        <authorList>
            <person name="Losada L."/>
            <person name="Ronning C.M."/>
            <person name="DeShazer D."/>
            <person name="Woods D."/>
            <person name="Fedorova N."/>
            <person name="Kim H.S."/>
            <person name="Shabalina S.A."/>
            <person name="Pearson T.R."/>
            <person name="Brinkac L."/>
            <person name="Tan P."/>
            <person name="Nandi T."/>
            <person name="Crabtree J."/>
            <person name="Badger J."/>
            <person name="Beckstrom-Sternberg S."/>
            <person name="Saqib M."/>
            <person name="Schutzer S.E."/>
            <person name="Keim P."/>
            <person name="Nierman W.C."/>
        </authorList>
    </citation>
    <scope>NUCLEOTIDE SEQUENCE [LARGE SCALE GENOMIC DNA]</scope>
    <source>
        <strain>NCTC 10229</strain>
    </source>
</reference>
<feature type="chain" id="PRO_1000055534" description="Large ribosomal subunit protein uL14">
    <location>
        <begin position="1"/>
        <end position="122"/>
    </location>
</feature>
<evidence type="ECO:0000255" key="1">
    <source>
        <dbReference type="HAMAP-Rule" id="MF_01367"/>
    </source>
</evidence>
<evidence type="ECO:0000305" key="2"/>
<sequence length="122" mass="13454">MIQTESRLEVADNTGAREVMCIKVLGGSKRRYASIGDIIKVSVKEATPRGRVKKGEIYNAVVVRTAKGVRRQDGSLIKFDGNAAVLLNNKLEPIGTRIFGPVTRELRSERFMKIVSLAPEVL</sequence>
<gene>
    <name evidence="1" type="primary">rplN</name>
    <name type="ordered locus">BMA10229_A1934</name>
</gene>
<comment type="function">
    <text evidence="1">Binds to 23S rRNA. Forms part of two intersubunit bridges in the 70S ribosome.</text>
</comment>
<comment type="subunit">
    <text evidence="1">Part of the 50S ribosomal subunit. Forms a cluster with proteins L3 and L19. In the 70S ribosome, L14 and L19 interact and together make contacts with the 16S rRNA in bridges B5 and B8.</text>
</comment>
<comment type="similarity">
    <text evidence="1">Belongs to the universal ribosomal protein uL14 family.</text>
</comment>
<protein>
    <recommendedName>
        <fullName evidence="1">Large ribosomal subunit protein uL14</fullName>
    </recommendedName>
    <alternativeName>
        <fullName evidence="2">50S ribosomal protein L14</fullName>
    </alternativeName>
</protein>
<organism>
    <name type="scientific">Burkholderia mallei (strain NCTC 10229)</name>
    <dbReference type="NCBI Taxonomy" id="412022"/>
    <lineage>
        <taxon>Bacteria</taxon>
        <taxon>Pseudomonadati</taxon>
        <taxon>Pseudomonadota</taxon>
        <taxon>Betaproteobacteria</taxon>
        <taxon>Burkholderiales</taxon>
        <taxon>Burkholderiaceae</taxon>
        <taxon>Burkholderia</taxon>
        <taxon>pseudomallei group</taxon>
    </lineage>
</organism>
<accession>A2S7I6</accession>
<name>RL14_BURM9</name>
<keyword id="KW-0687">Ribonucleoprotein</keyword>
<keyword id="KW-0689">Ribosomal protein</keyword>
<keyword id="KW-0694">RNA-binding</keyword>
<keyword id="KW-0699">rRNA-binding</keyword>
<dbReference type="EMBL" id="CP000546">
    <property type="protein sequence ID" value="ABN03474.1"/>
    <property type="molecule type" value="Genomic_DNA"/>
</dbReference>
<dbReference type="RefSeq" id="WP_004197951.1">
    <property type="nucleotide sequence ID" value="NC_008836.1"/>
</dbReference>
<dbReference type="SMR" id="A2S7I6"/>
<dbReference type="GeneID" id="93171007"/>
<dbReference type="KEGG" id="bml:BMA10229_A1934"/>
<dbReference type="HOGENOM" id="CLU_095071_2_1_4"/>
<dbReference type="Proteomes" id="UP000002283">
    <property type="component" value="Chromosome I"/>
</dbReference>
<dbReference type="GO" id="GO:0022625">
    <property type="term" value="C:cytosolic large ribosomal subunit"/>
    <property type="evidence" value="ECO:0007669"/>
    <property type="project" value="TreeGrafter"/>
</dbReference>
<dbReference type="GO" id="GO:0070180">
    <property type="term" value="F:large ribosomal subunit rRNA binding"/>
    <property type="evidence" value="ECO:0007669"/>
    <property type="project" value="TreeGrafter"/>
</dbReference>
<dbReference type="GO" id="GO:0003735">
    <property type="term" value="F:structural constituent of ribosome"/>
    <property type="evidence" value="ECO:0007669"/>
    <property type="project" value="InterPro"/>
</dbReference>
<dbReference type="GO" id="GO:0006412">
    <property type="term" value="P:translation"/>
    <property type="evidence" value="ECO:0007669"/>
    <property type="project" value="UniProtKB-UniRule"/>
</dbReference>
<dbReference type="CDD" id="cd00337">
    <property type="entry name" value="Ribosomal_uL14"/>
    <property type="match status" value="1"/>
</dbReference>
<dbReference type="FunFam" id="2.40.150.20:FF:000001">
    <property type="entry name" value="50S ribosomal protein L14"/>
    <property type="match status" value="1"/>
</dbReference>
<dbReference type="Gene3D" id="2.40.150.20">
    <property type="entry name" value="Ribosomal protein L14"/>
    <property type="match status" value="1"/>
</dbReference>
<dbReference type="HAMAP" id="MF_01367">
    <property type="entry name" value="Ribosomal_uL14"/>
    <property type="match status" value="1"/>
</dbReference>
<dbReference type="InterPro" id="IPR000218">
    <property type="entry name" value="Ribosomal_uL14"/>
</dbReference>
<dbReference type="InterPro" id="IPR005745">
    <property type="entry name" value="Ribosomal_uL14_bac-type"/>
</dbReference>
<dbReference type="InterPro" id="IPR019972">
    <property type="entry name" value="Ribosomal_uL14_CS"/>
</dbReference>
<dbReference type="InterPro" id="IPR036853">
    <property type="entry name" value="Ribosomal_uL14_sf"/>
</dbReference>
<dbReference type="NCBIfam" id="TIGR01067">
    <property type="entry name" value="rplN_bact"/>
    <property type="match status" value="1"/>
</dbReference>
<dbReference type="PANTHER" id="PTHR11761">
    <property type="entry name" value="50S/60S RIBOSOMAL PROTEIN L14/L23"/>
    <property type="match status" value="1"/>
</dbReference>
<dbReference type="PANTHER" id="PTHR11761:SF3">
    <property type="entry name" value="LARGE RIBOSOMAL SUBUNIT PROTEIN UL14M"/>
    <property type="match status" value="1"/>
</dbReference>
<dbReference type="Pfam" id="PF00238">
    <property type="entry name" value="Ribosomal_L14"/>
    <property type="match status" value="1"/>
</dbReference>
<dbReference type="SMART" id="SM01374">
    <property type="entry name" value="Ribosomal_L14"/>
    <property type="match status" value="1"/>
</dbReference>
<dbReference type="SUPFAM" id="SSF50193">
    <property type="entry name" value="Ribosomal protein L14"/>
    <property type="match status" value="1"/>
</dbReference>
<dbReference type="PROSITE" id="PS00049">
    <property type="entry name" value="RIBOSOMAL_L14"/>
    <property type="match status" value="1"/>
</dbReference>
<proteinExistence type="inferred from homology"/>